<reference key="1">
    <citation type="journal article" date="2007" name="Archaea">
        <title>The genome of Hyperthermus butylicus: a sulfur-reducing, peptide fermenting, neutrophilic Crenarchaeote growing up to 108 degrees C.</title>
        <authorList>
            <person name="Bruegger K."/>
            <person name="Chen L."/>
            <person name="Stark M."/>
            <person name="Zibat A."/>
            <person name="Redder P."/>
            <person name="Ruepp A."/>
            <person name="Awayez M."/>
            <person name="She Q."/>
            <person name="Garrett R.A."/>
            <person name="Klenk H.-P."/>
        </authorList>
    </citation>
    <scope>NUCLEOTIDE SEQUENCE [LARGE SCALE GENOMIC DNA]</scope>
    <source>
        <strain>DSM 5456 / JCM 9403 / PLM1-5</strain>
    </source>
</reference>
<dbReference type="EMBL" id="CP000493">
    <property type="protein sequence ID" value="ABM80387.1"/>
    <property type="molecule type" value="Genomic_DNA"/>
</dbReference>
<dbReference type="RefSeq" id="WP_011821705.1">
    <property type="nucleotide sequence ID" value="NC_008818.1"/>
</dbReference>
<dbReference type="SMR" id="A2BK76"/>
<dbReference type="STRING" id="415426.Hbut_0527"/>
<dbReference type="EnsemblBacteria" id="ABM80387">
    <property type="protein sequence ID" value="ABM80387"/>
    <property type="gene ID" value="Hbut_0527"/>
</dbReference>
<dbReference type="GeneID" id="4782388"/>
<dbReference type="KEGG" id="hbu:Hbut_0527"/>
<dbReference type="eggNOG" id="arCOG01722">
    <property type="taxonomic scope" value="Archaea"/>
</dbReference>
<dbReference type="HOGENOM" id="CLU_103849_0_0_2"/>
<dbReference type="OrthoDB" id="372127at2157"/>
<dbReference type="Proteomes" id="UP000002593">
    <property type="component" value="Chromosome"/>
</dbReference>
<dbReference type="GO" id="GO:0005829">
    <property type="term" value="C:cytosol"/>
    <property type="evidence" value="ECO:0007669"/>
    <property type="project" value="TreeGrafter"/>
</dbReference>
<dbReference type="GO" id="GO:0015935">
    <property type="term" value="C:small ribosomal subunit"/>
    <property type="evidence" value="ECO:0007669"/>
    <property type="project" value="TreeGrafter"/>
</dbReference>
<dbReference type="GO" id="GO:0019843">
    <property type="term" value="F:rRNA binding"/>
    <property type="evidence" value="ECO:0007669"/>
    <property type="project" value="UniProtKB-UniRule"/>
</dbReference>
<dbReference type="GO" id="GO:0003735">
    <property type="term" value="F:structural constituent of ribosome"/>
    <property type="evidence" value="ECO:0007669"/>
    <property type="project" value="InterPro"/>
</dbReference>
<dbReference type="GO" id="GO:0006412">
    <property type="term" value="P:translation"/>
    <property type="evidence" value="ECO:0007669"/>
    <property type="project" value="UniProtKB-UniRule"/>
</dbReference>
<dbReference type="FunFam" id="1.10.8.50:FF:000001">
    <property type="entry name" value="30S ribosomal protein S13"/>
    <property type="match status" value="1"/>
</dbReference>
<dbReference type="FunFam" id="4.10.910.10:FF:000002">
    <property type="entry name" value="40S ribosomal protein S18"/>
    <property type="match status" value="1"/>
</dbReference>
<dbReference type="Gene3D" id="1.10.8.50">
    <property type="match status" value="1"/>
</dbReference>
<dbReference type="Gene3D" id="4.10.910.10">
    <property type="entry name" value="30s ribosomal protein s13, domain 2"/>
    <property type="match status" value="1"/>
</dbReference>
<dbReference type="HAMAP" id="MF_01315">
    <property type="entry name" value="Ribosomal_uS13"/>
    <property type="match status" value="1"/>
</dbReference>
<dbReference type="InterPro" id="IPR027437">
    <property type="entry name" value="Rbsml_uS13_C"/>
</dbReference>
<dbReference type="InterPro" id="IPR001892">
    <property type="entry name" value="Ribosomal_uS13"/>
</dbReference>
<dbReference type="InterPro" id="IPR010979">
    <property type="entry name" value="Ribosomal_uS13-like_H2TH"/>
</dbReference>
<dbReference type="InterPro" id="IPR019977">
    <property type="entry name" value="Ribosomal_uS13_archaeal"/>
</dbReference>
<dbReference type="InterPro" id="IPR018269">
    <property type="entry name" value="Ribosomal_uS13_CS"/>
</dbReference>
<dbReference type="NCBIfam" id="NF003140">
    <property type="entry name" value="PRK04053.1"/>
    <property type="match status" value="1"/>
</dbReference>
<dbReference type="NCBIfam" id="TIGR03629">
    <property type="entry name" value="uS13_arch"/>
    <property type="match status" value="1"/>
</dbReference>
<dbReference type="PANTHER" id="PTHR10871">
    <property type="entry name" value="30S RIBOSOMAL PROTEIN S13/40S RIBOSOMAL PROTEIN S18"/>
    <property type="match status" value="1"/>
</dbReference>
<dbReference type="PANTHER" id="PTHR10871:SF3">
    <property type="entry name" value="SMALL RIBOSOMAL SUBUNIT PROTEIN US13"/>
    <property type="match status" value="1"/>
</dbReference>
<dbReference type="Pfam" id="PF00416">
    <property type="entry name" value="Ribosomal_S13"/>
    <property type="match status" value="1"/>
</dbReference>
<dbReference type="PIRSF" id="PIRSF002134">
    <property type="entry name" value="Ribosomal_S13"/>
    <property type="match status" value="1"/>
</dbReference>
<dbReference type="SUPFAM" id="SSF46946">
    <property type="entry name" value="S13-like H2TH domain"/>
    <property type="match status" value="1"/>
</dbReference>
<dbReference type="PROSITE" id="PS00646">
    <property type="entry name" value="RIBOSOMAL_S13_1"/>
    <property type="match status" value="1"/>
</dbReference>
<dbReference type="PROSITE" id="PS50159">
    <property type="entry name" value="RIBOSOMAL_S13_2"/>
    <property type="match status" value="1"/>
</dbReference>
<comment type="function">
    <text evidence="1">Located at the top of the head of the 30S subunit, it contacts several helices of the 16S rRNA. In the 70S ribosome it contacts the 23S rRNA (bridge B1a) and protein L5 of the 50S subunit (bridge B1b), connecting the 2 subunits; these bridges are implicated in subunit movement.</text>
</comment>
<comment type="subunit">
    <text evidence="1">Part of the 30S ribosomal subunit. Forms a loose heterodimer with protein S19. Forms two bridges to the 50S subunit in the 70S ribosome.</text>
</comment>
<comment type="similarity">
    <text evidence="1">Belongs to the universal ribosomal protein uS13 family.</text>
</comment>
<sequence length="151" mass="17087">MLSEQQYRYIVRILGTDIPGDLKVPYGLALVKGIGVNLAYALCRLLGIDPNKRIGFLTDAEIEKIEKAMANPLAIGIPVWMLNRRKDYETGKDLHLVGADLIYYVKRDIEREKRIRSWRGIRHALGLKVRGQRTATTGRIGMTIGVRKGKK</sequence>
<evidence type="ECO:0000255" key="1">
    <source>
        <dbReference type="HAMAP-Rule" id="MF_01315"/>
    </source>
</evidence>
<evidence type="ECO:0000305" key="2"/>
<organism>
    <name type="scientific">Hyperthermus butylicus (strain DSM 5456 / JCM 9403 / PLM1-5)</name>
    <dbReference type="NCBI Taxonomy" id="415426"/>
    <lineage>
        <taxon>Archaea</taxon>
        <taxon>Thermoproteota</taxon>
        <taxon>Thermoprotei</taxon>
        <taxon>Desulfurococcales</taxon>
        <taxon>Pyrodictiaceae</taxon>
        <taxon>Hyperthermus</taxon>
    </lineage>
</organism>
<accession>A2BK76</accession>
<name>RS13_HYPBU</name>
<feature type="chain" id="PRO_0000306751" description="Small ribosomal subunit protein uS13">
    <location>
        <begin position="1"/>
        <end position="151"/>
    </location>
</feature>
<gene>
    <name evidence="1" type="primary">rps13</name>
    <name type="ordered locus">Hbut_0527</name>
</gene>
<keyword id="KW-1185">Reference proteome</keyword>
<keyword id="KW-0687">Ribonucleoprotein</keyword>
<keyword id="KW-0689">Ribosomal protein</keyword>
<keyword id="KW-0694">RNA-binding</keyword>
<keyword id="KW-0699">rRNA-binding</keyword>
<proteinExistence type="inferred from homology"/>
<protein>
    <recommendedName>
        <fullName evidence="1">Small ribosomal subunit protein uS13</fullName>
    </recommendedName>
    <alternativeName>
        <fullName evidence="2">30S ribosomal protein S13</fullName>
    </alternativeName>
</protein>